<gene>
    <name evidence="1" type="primary">rpsU</name>
    <name type="ordered locus">Cthe_1348</name>
</gene>
<reference key="1">
    <citation type="submission" date="2007-02" db="EMBL/GenBank/DDBJ databases">
        <title>Complete sequence of Clostridium thermocellum ATCC 27405.</title>
        <authorList>
            <consortium name="US DOE Joint Genome Institute"/>
            <person name="Copeland A."/>
            <person name="Lucas S."/>
            <person name="Lapidus A."/>
            <person name="Barry K."/>
            <person name="Detter J.C."/>
            <person name="Glavina del Rio T."/>
            <person name="Hammon N."/>
            <person name="Israni S."/>
            <person name="Dalin E."/>
            <person name="Tice H."/>
            <person name="Pitluck S."/>
            <person name="Chertkov O."/>
            <person name="Brettin T."/>
            <person name="Bruce D."/>
            <person name="Han C."/>
            <person name="Tapia R."/>
            <person name="Gilna P."/>
            <person name="Schmutz J."/>
            <person name="Larimer F."/>
            <person name="Land M."/>
            <person name="Hauser L."/>
            <person name="Kyrpides N."/>
            <person name="Mikhailova N."/>
            <person name="Wu J.H.D."/>
            <person name="Newcomb M."/>
            <person name="Richardson P."/>
        </authorList>
    </citation>
    <scope>NUCLEOTIDE SEQUENCE [LARGE SCALE GENOMIC DNA]</scope>
    <source>
        <strain>ATCC 27405 / DSM 1237 / JCM 9322 / NBRC 103400 / NCIMB 10682 / NRRL B-4536 / VPI 7372</strain>
    </source>
</reference>
<name>RS21_ACET2</name>
<dbReference type="EMBL" id="CP000568">
    <property type="protein sequence ID" value="ABN52580.1"/>
    <property type="molecule type" value="Genomic_DNA"/>
</dbReference>
<dbReference type="RefSeq" id="WP_003517075.1">
    <property type="nucleotide sequence ID" value="NC_009012.1"/>
</dbReference>
<dbReference type="SMR" id="A3DF51"/>
<dbReference type="STRING" id="203119.Cthe_1348"/>
<dbReference type="GeneID" id="35805696"/>
<dbReference type="KEGG" id="cth:Cthe_1348"/>
<dbReference type="eggNOG" id="COG0828">
    <property type="taxonomic scope" value="Bacteria"/>
</dbReference>
<dbReference type="HOGENOM" id="CLU_159258_1_2_9"/>
<dbReference type="OrthoDB" id="9799244at2"/>
<dbReference type="Proteomes" id="UP000002145">
    <property type="component" value="Chromosome"/>
</dbReference>
<dbReference type="GO" id="GO:1990904">
    <property type="term" value="C:ribonucleoprotein complex"/>
    <property type="evidence" value="ECO:0007669"/>
    <property type="project" value="UniProtKB-KW"/>
</dbReference>
<dbReference type="GO" id="GO:0005840">
    <property type="term" value="C:ribosome"/>
    <property type="evidence" value="ECO:0007669"/>
    <property type="project" value="UniProtKB-KW"/>
</dbReference>
<dbReference type="GO" id="GO:0003735">
    <property type="term" value="F:structural constituent of ribosome"/>
    <property type="evidence" value="ECO:0007669"/>
    <property type="project" value="InterPro"/>
</dbReference>
<dbReference type="GO" id="GO:0006412">
    <property type="term" value="P:translation"/>
    <property type="evidence" value="ECO:0007669"/>
    <property type="project" value="UniProtKB-UniRule"/>
</dbReference>
<dbReference type="Gene3D" id="1.20.5.1150">
    <property type="entry name" value="Ribosomal protein S8"/>
    <property type="match status" value="1"/>
</dbReference>
<dbReference type="HAMAP" id="MF_00358">
    <property type="entry name" value="Ribosomal_bS21"/>
    <property type="match status" value="1"/>
</dbReference>
<dbReference type="InterPro" id="IPR001911">
    <property type="entry name" value="Ribosomal_bS21"/>
</dbReference>
<dbReference type="InterPro" id="IPR018278">
    <property type="entry name" value="Ribosomal_bS21_CS"/>
</dbReference>
<dbReference type="InterPro" id="IPR038380">
    <property type="entry name" value="Ribosomal_bS21_sf"/>
</dbReference>
<dbReference type="NCBIfam" id="TIGR00030">
    <property type="entry name" value="S21p"/>
    <property type="match status" value="1"/>
</dbReference>
<dbReference type="PANTHER" id="PTHR21109">
    <property type="entry name" value="MITOCHONDRIAL 28S RIBOSOMAL PROTEIN S21"/>
    <property type="match status" value="1"/>
</dbReference>
<dbReference type="PANTHER" id="PTHR21109:SF22">
    <property type="entry name" value="SMALL RIBOSOMAL SUBUNIT PROTEIN BS21"/>
    <property type="match status" value="1"/>
</dbReference>
<dbReference type="Pfam" id="PF01165">
    <property type="entry name" value="Ribosomal_S21"/>
    <property type="match status" value="1"/>
</dbReference>
<dbReference type="PRINTS" id="PR00976">
    <property type="entry name" value="RIBOSOMALS21"/>
</dbReference>
<dbReference type="PROSITE" id="PS01181">
    <property type="entry name" value="RIBOSOMAL_S21"/>
    <property type="match status" value="1"/>
</dbReference>
<keyword id="KW-1185">Reference proteome</keyword>
<keyword id="KW-0687">Ribonucleoprotein</keyword>
<keyword id="KW-0689">Ribosomal protein</keyword>
<proteinExistence type="inferred from homology"/>
<comment type="similarity">
    <text evidence="1">Belongs to the bacterial ribosomal protein bS21 family.</text>
</comment>
<protein>
    <recommendedName>
        <fullName evidence="1">Small ribosomal subunit protein bS21</fullName>
    </recommendedName>
    <alternativeName>
        <fullName evidence="3">30S ribosomal protein S21</fullName>
    </alternativeName>
</protein>
<sequence length="58" mass="6906">MSEVRVKENESLDSALKRFKRQCAKAGVLAEVRKREHYESPSVRRKKKSEAARKRRYK</sequence>
<accession>A3DF51</accession>
<organism>
    <name type="scientific">Acetivibrio thermocellus (strain ATCC 27405 / DSM 1237 / JCM 9322 / NBRC 103400 / NCIMB 10682 / NRRL B-4536 / VPI 7372)</name>
    <name type="common">Clostridium thermocellum</name>
    <dbReference type="NCBI Taxonomy" id="203119"/>
    <lineage>
        <taxon>Bacteria</taxon>
        <taxon>Bacillati</taxon>
        <taxon>Bacillota</taxon>
        <taxon>Clostridia</taxon>
        <taxon>Eubacteriales</taxon>
        <taxon>Oscillospiraceae</taxon>
        <taxon>Acetivibrio</taxon>
    </lineage>
</organism>
<feature type="chain" id="PRO_1000005113" description="Small ribosomal subunit protein bS21">
    <location>
        <begin position="1"/>
        <end position="58"/>
    </location>
</feature>
<feature type="region of interest" description="Disordered" evidence="2">
    <location>
        <begin position="35"/>
        <end position="58"/>
    </location>
</feature>
<feature type="compositionally biased region" description="Basic residues" evidence="2">
    <location>
        <begin position="43"/>
        <end position="58"/>
    </location>
</feature>
<evidence type="ECO:0000255" key="1">
    <source>
        <dbReference type="HAMAP-Rule" id="MF_00358"/>
    </source>
</evidence>
<evidence type="ECO:0000256" key="2">
    <source>
        <dbReference type="SAM" id="MobiDB-lite"/>
    </source>
</evidence>
<evidence type="ECO:0000305" key="3"/>